<name>DTML_BURMS</name>
<organism>
    <name type="scientific">Burkholderia mallei (strain SAVP1)</name>
    <dbReference type="NCBI Taxonomy" id="320388"/>
    <lineage>
        <taxon>Bacteria</taxon>
        <taxon>Pseudomonadati</taxon>
        <taxon>Pseudomonadota</taxon>
        <taxon>Betaproteobacteria</taxon>
        <taxon>Burkholderiales</taxon>
        <taxon>Burkholderiaceae</taxon>
        <taxon>Burkholderia</taxon>
        <taxon>pseudomallei group</taxon>
    </lineage>
</organism>
<sequence>MGNGERPPARRPDSSGSPPPAADAPAASNHPFSSHDTKHMTSRRLASRTAVAASLSALMLAACGGDDSANAPTAGGAAPLTPAVASPAGPTGSTPGSTPGATTAPAPSSTSAGQLSVDKMAFAQTHVVPSGGLSWTLPNASASLRPISRRDALVLVAIGQADAVQPVLEAWKDGAKLGALALSPPSALPPTESGGRAYANDRWSAVVPAAWMVPGVSFSVSASNYTSSVAQAPVFGTDADVQLTILPFYLFGADDTNSPPLSTTQAPDAATQQEIFAKWPTAELKVRTHPAGRFSLATVVVGPRADRTGAAQPAYPVTALDQQKDGYGVMSAMLTLITNMRTANGDGPLNDQYYAPLIALNSNGQFANLGGGLGGVGSGAAVGDHRYTGIFIHEQGHAFGLNHAGDEYAKGAYPYAGGSLSGSVWGYDPNHREFLDVLVPTTASSYAKCASSHQLDAQGRCYKQDPMQGGAGDQSSGYKFATFSDYNTGRMQAWIASRVLADPASSTGYSKWDSAAQARAPYTPTTDNNGLYGVNQNLPVQAGVPVHTIVVSFSKAGSAGASYIYPPFSYTGNLIATFDPTSAADRQAITVDKGTYPWYCKGTGCDYTLRVTYADGSRTYRVLQGGFRAWWTPTVYDANATNPLSGSSFRVWAINVPGDKRIGKIELLDTPMVWNGMPANPTVLLSR</sequence>
<reference key="1">
    <citation type="journal article" date="2010" name="Genome Biol. Evol.">
        <title>Continuing evolution of Burkholderia mallei through genome reduction and large-scale rearrangements.</title>
        <authorList>
            <person name="Losada L."/>
            <person name="Ronning C.M."/>
            <person name="DeShazer D."/>
            <person name="Woods D."/>
            <person name="Fedorova N."/>
            <person name="Kim H.S."/>
            <person name="Shabalina S.A."/>
            <person name="Pearson T.R."/>
            <person name="Brinkac L."/>
            <person name="Tan P."/>
            <person name="Nandi T."/>
            <person name="Crabtree J."/>
            <person name="Badger J."/>
            <person name="Beckstrom-Sternberg S."/>
            <person name="Saqib M."/>
            <person name="Schutzer S.E."/>
            <person name="Keim P."/>
            <person name="Nierman W.C."/>
        </authorList>
    </citation>
    <scope>NUCLEOTIDE SEQUENCE [LARGE SCALE GENOMIC DNA]</scope>
    <source>
        <strain>SAVP1</strain>
    </source>
</reference>
<proteinExistence type="inferred from homology"/>
<gene>
    <name type="primary">dtmL</name>
    <name type="ordered locus">BMASAVP1_0112</name>
</gene>
<feature type="chain" id="PRO_0000322654" description="Dictomallein">
    <location>
        <begin position="1"/>
        <end position="687"/>
    </location>
</feature>
<feature type="domain" description="Peptidase M66">
    <location>
        <begin position="233"/>
        <end position="501"/>
    </location>
</feature>
<feature type="region of interest" description="Disordered" evidence="2">
    <location>
        <begin position="1"/>
        <end position="45"/>
    </location>
</feature>
<feature type="region of interest" description="Disordered" evidence="2">
    <location>
        <begin position="73"/>
        <end position="112"/>
    </location>
</feature>
<feature type="active site" evidence="1">
    <location>
        <position position="394"/>
    </location>
</feature>
<feature type="binding site" evidence="1">
    <location>
        <position position="393"/>
    </location>
    <ligand>
        <name>Zn(2+)</name>
        <dbReference type="ChEBI" id="CHEBI:29105"/>
        <note>catalytic</note>
    </ligand>
</feature>
<feature type="binding site" evidence="1">
    <location>
        <position position="397"/>
    </location>
    <ligand>
        <name>Zn(2+)</name>
        <dbReference type="ChEBI" id="CHEBI:29105"/>
        <note>catalytic</note>
    </ligand>
</feature>
<feature type="binding site" evidence="1">
    <location>
        <position position="403"/>
    </location>
    <ligand>
        <name>Zn(2+)</name>
        <dbReference type="ChEBI" id="CHEBI:29105"/>
        <note>catalytic</note>
    </ligand>
</feature>
<protein>
    <recommendedName>
        <fullName>Dictomallein</fullName>
        <ecNumber>3.4.24.-</ecNumber>
    </recommendedName>
</protein>
<dbReference type="EC" id="3.4.24.-"/>
<dbReference type="EMBL" id="CP000525">
    <property type="protein sequence ID" value="ABM49259.1"/>
    <property type="molecule type" value="Genomic_DNA"/>
</dbReference>
<dbReference type="RefSeq" id="WP_004198081.1">
    <property type="nucleotide sequence ID" value="NC_008784.1"/>
</dbReference>
<dbReference type="SMR" id="A1UUS6"/>
<dbReference type="KEGG" id="bmv:BMASAVP1_0112"/>
<dbReference type="HOGENOM" id="CLU_451780_0_0_4"/>
<dbReference type="GO" id="GO:0046872">
    <property type="term" value="F:metal ion binding"/>
    <property type="evidence" value="ECO:0007669"/>
    <property type="project" value="UniProtKB-KW"/>
</dbReference>
<dbReference type="GO" id="GO:0004222">
    <property type="term" value="F:metalloendopeptidase activity"/>
    <property type="evidence" value="ECO:0007669"/>
    <property type="project" value="InterPro"/>
</dbReference>
<dbReference type="GO" id="GO:0006508">
    <property type="term" value="P:proteolysis"/>
    <property type="evidence" value="ECO:0007669"/>
    <property type="project" value="UniProtKB-KW"/>
</dbReference>
<dbReference type="InterPro" id="IPR051256">
    <property type="entry name" value="Dictomallein"/>
</dbReference>
<dbReference type="InterPro" id="IPR019503">
    <property type="entry name" value="Peptidase_M66_dom"/>
</dbReference>
<dbReference type="PANTHER" id="PTHR39540">
    <property type="match status" value="1"/>
</dbReference>
<dbReference type="PANTHER" id="PTHR39540:SF1">
    <property type="entry name" value="DICTOMALLEIN-1-RELATED"/>
    <property type="match status" value="1"/>
</dbReference>
<dbReference type="Pfam" id="PF10462">
    <property type="entry name" value="Peptidase_M66"/>
    <property type="match status" value="1"/>
</dbReference>
<dbReference type="SUPFAM" id="SSF55486">
    <property type="entry name" value="Metalloproteases ('zincins'), catalytic domain"/>
    <property type="match status" value="1"/>
</dbReference>
<dbReference type="PROSITE" id="PS51694">
    <property type="entry name" value="PEPTIDASE_M66"/>
    <property type="match status" value="1"/>
</dbReference>
<comment type="cofactor">
    <cofactor evidence="3">
        <name>Zn(2+)</name>
        <dbReference type="ChEBI" id="CHEBI:29105"/>
    </cofactor>
    <text evidence="3">Binds 1 zinc ion per subunit.</text>
</comment>
<comment type="similarity">
    <text evidence="3">Belongs to the dictomallein family.</text>
</comment>
<evidence type="ECO:0000250" key="1"/>
<evidence type="ECO:0000256" key="2">
    <source>
        <dbReference type="SAM" id="MobiDB-lite"/>
    </source>
</evidence>
<evidence type="ECO:0000305" key="3"/>
<keyword id="KW-0378">Hydrolase</keyword>
<keyword id="KW-0479">Metal-binding</keyword>
<keyword id="KW-0482">Metalloprotease</keyword>
<keyword id="KW-0645">Protease</keyword>
<keyword id="KW-0862">Zinc</keyword>
<accession>A1UUS6</accession>